<proteinExistence type="predicted"/>
<evidence type="ECO:0000255" key="1"/>
<evidence type="ECO:0000305" key="2"/>
<reference key="1">
    <citation type="journal article" date="2004" name="J. Gen. Virol.">
        <title>Genetic content of wild-type human cytomegalovirus.</title>
        <authorList>
            <person name="Dolan A."/>
            <person name="Cunningham C."/>
            <person name="Hector R.D."/>
            <person name="Hassan-Walker A.F."/>
            <person name="Lee L."/>
            <person name="Addison C."/>
            <person name="Dargan D.J."/>
            <person name="McGeoch D.J."/>
            <person name="Gatherer D."/>
            <person name="Emery V.C."/>
            <person name="Griffiths P.D."/>
            <person name="Sinzger C."/>
            <person name="McSharry B.P."/>
            <person name="Wilkinson G.W.G."/>
            <person name="Davison A.J."/>
        </authorList>
    </citation>
    <scope>NUCLEOTIDE SEQUENCE [LARGE SCALE GENOMIC DNA]</scope>
</reference>
<organism>
    <name type="scientific">Human cytomegalovirus (strain Merlin)</name>
    <name type="common">HHV-5</name>
    <name type="synonym">Human herpesvirus 5</name>
    <dbReference type="NCBI Taxonomy" id="295027"/>
    <lineage>
        <taxon>Viruses</taxon>
        <taxon>Duplodnaviria</taxon>
        <taxon>Heunggongvirae</taxon>
        <taxon>Peploviricota</taxon>
        <taxon>Herviviricetes</taxon>
        <taxon>Herpesvirales</taxon>
        <taxon>Orthoherpesviridae</taxon>
        <taxon>Betaherpesvirinae</taxon>
        <taxon>Cytomegalovirus</taxon>
        <taxon>Cytomegalovirus humanbeta5</taxon>
        <taxon>Human cytomegalovirus</taxon>
    </lineage>
</organism>
<name>RL9A_HCMVM</name>
<protein>
    <recommendedName>
        <fullName>Protein RL9A</fullName>
    </recommendedName>
</protein>
<keyword id="KW-1043">Host membrane</keyword>
<keyword id="KW-0472">Membrane</keyword>
<keyword id="KW-1185">Reference proteome</keyword>
<keyword id="KW-0812">Transmembrane</keyword>
<keyword id="KW-1133">Transmembrane helix</keyword>
<sequence length="47" mass="5270">MSLDAASHQPAARRLLDSALVRRVLACMIIVIMIAISIWILTYVLFL</sequence>
<accession>F7V996</accession>
<dbReference type="EMBL" id="AY446894">
    <property type="protein sequence ID" value="AEJ33667.1"/>
    <property type="molecule type" value="Genomic_DNA"/>
</dbReference>
<dbReference type="RefSeq" id="YP_004940330.1">
    <property type="nucleotide sequence ID" value="NC_006273.2"/>
</dbReference>
<dbReference type="SMR" id="F7V996"/>
<dbReference type="GeneID" id="13229473"/>
<dbReference type="KEGG" id="vg:13229473"/>
<dbReference type="Reactome" id="R-HSA-9610379">
    <property type="pathway name" value="HCMV Late Events"/>
</dbReference>
<dbReference type="Proteomes" id="UP000000938">
    <property type="component" value="Segment"/>
</dbReference>
<dbReference type="GO" id="GO:0033644">
    <property type="term" value="C:host cell membrane"/>
    <property type="evidence" value="ECO:0007669"/>
    <property type="project" value="UniProtKB-SubCell"/>
</dbReference>
<dbReference type="GO" id="GO:0016020">
    <property type="term" value="C:membrane"/>
    <property type="evidence" value="ECO:0007669"/>
    <property type="project" value="UniProtKB-KW"/>
</dbReference>
<comment type="subcellular location">
    <subcellularLocation>
        <location evidence="2">Host membrane</location>
        <topology evidence="2">Single-pass membrane protein</topology>
    </subcellularLocation>
</comment>
<feature type="chain" id="PRO_0000418308" description="Protein RL9A">
    <location>
        <begin position="1"/>
        <end position="47"/>
    </location>
</feature>
<feature type="transmembrane region" description="Helical" evidence="1">
    <location>
        <begin position="27"/>
        <end position="47"/>
    </location>
</feature>
<gene>
    <name type="primary">RL9A</name>
</gene>
<organismHost>
    <name type="scientific">Homo sapiens</name>
    <name type="common">Human</name>
    <dbReference type="NCBI Taxonomy" id="9606"/>
</organismHost>